<keyword id="KW-1185">Reference proteome</keyword>
<keyword id="KW-0687">Ribonucleoprotein</keyword>
<keyword id="KW-0689">Ribosomal protein</keyword>
<keyword id="KW-0694">RNA-binding</keyword>
<keyword id="KW-0699">rRNA-binding</keyword>
<dbReference type="EMBL" id="AE004092">
    <property type="protein sequence ID" value="AAK33198.1"/>
    <property type="molecule type" value="Genomic_DNA"/>
</dbReference>
<dbReference type="EMBL" id="CP000017">
    <property type="protein sequence ID" value="AAZ50679.1"/>
    <property type="molecule type" value="Genomic_DNA"/>
</dbReference>
<dbReference type="RefSeq" id="NP_268476.1">
    <property type="nucleotide sequence ID" value="NC_002737.2"/>
</dbReference>
<dbReference type="SMR" id="Q9A1V8"/>
<dbReference type="PaxDb" id="1314-HKU360_00093"/>
<dbReference type="KEGG" id="spy:SPy_0067"/>
<dbReference type="KEGG" id="spz:M5005_Spy0060"/>
<dbReference type="PATRIC" id="fig|160490.10.peg.60"/>
<dbReference type="HOGENOM" id="CLU_098841_0_1_9"/>
<dbReference type="OMA" id="NKQIYAQ"/>
<dbReference type="PRO" id="PR:Q9A1V8"/>
<dbReference type="Proteomes" id="UP000000750">
    <property type="component" value="Chromosome"/>
</dbReference>
<dbReference type="GO" id="GO:0022625">
    <property type="term" value="C:cytosolic large ribosomal subunit"/>
    <property type="evidence" value="ECO:0007669"/>
    <property type="project" value="TreeGrafter"/>
</dbReference>
<dbReference type="GO" id="GO:0008097">
    <property type="term" value="F:5S rRNA binding"/>
    <property type="evidence" value="ECO:0007669"/>
    <property type="project" value="TreeGrafter"/>
</dbReference>
<dbReference type="GO" id="GO:0003735">
    <property type="term" value="F:structural constituent of ribosome"/>
    <property type="evidence" value="ECO:0007669"/>
    <property type="project" value="InterPro"/>
</dbReference>
<dbReference type="GO" id="GO:0006412">
    <property type="term" value="P:translation"/>
    <property type="evidence" value="ECO:0007669"/>
    <property type="project" value="UniProtKB-UniRule"/>
</dbReference>
<dbReference type="CDD" id="cd00432">
    <property type="entry name" value="Ribosomal_L18_L5e"/>
    <property type="match status" value="1"/>
</dbReference>
<dbReference type="FunFam" id="3.30.420.100:FF:000001">
    <property type="entry name" value="50S ribosomal protein L18"/>
    <property type="match status" value="1"/>
</dbReference>
<dbReference type="Gene3D" id="3.30.420.100">
    <property type="match status" value="1"/>
</dbReference>
<dbReference type="HAMAP" id="MF_01337_B">
    <property type="entry name" value="Ribosomal_uL18_B"/>
    <property type="match status" value="1"/>
</dbReference>
<dbReference type="InterPro" id="IPR004389">
    <property type="entry name" value="Ribosomal_uL18_bac-type"/>
</dbReference>
<dbReference type="InterPro" id="IPR005484">
    <property type="entry name" value="Ribosomal_uL18_bac/euk"/>
</dbReference>
<dbReference type="NCBIfam" id="TIGR00060">
    <property type="entry name" value="L18_bact"/>
    <property type="match status" value="1"/>
</dbReference>
<dbReference type="PANTHER" id="PTHR12899">
    <property type="entry name" value="39S RIBOSOMAL PROTEIN L18, MITOCHONDRIAL"/>
    <property type="match status" value="1"/>
</dbReference>
<dbReference type="PANTHER" id="PTHR12899:SF3">
    <property type="entry name" value="LARGE RIBOSOMAL SUBUNIT PROTEIN UL18M"/>
    <property type="match status" value="1"/>
</dbReference>
<dbReference type="Pfam" id="PF00861">
    <property type="entry name" value="Ribosomal_L18p"/>
    <property type="match status" value="1"/>
</dbReference>
<dbReference type="SUPFAM" id="SSF53137">
    <property type="entry name" value="Translational machinery components"/>
    <property type="match status" value="1"/>
</dbReference>
<sequence length="118" mass="12866">MISKPDKNKIRQKRHRRVRGKLSGTADRPRLNVFRSNTGIYAQVIDDVAGVTLASASTLDKDVSKGTKTEQAVVVGKLVAERAVAKGISEVVFDRGGYLYHGRVKALADAARENGLKF</sequence>
<protein>
    <recommendedName>
        <fullName evidence="1">Large ribosomal subunit protein uL18</fullName>
    </recommendedName>
    <alternativeName>
        <fullName evidence="3">50S ribosomal protein L18</fullName>
    </alternativeName>
</protein>
<reference key="1">
    <citation type="journal article" date="2001" name="Proc. Natl. Acad. Sci. U.S.A.">
        <title>Complete genome sequence of an M1 strain of Streptococcus pyogenes.</title>
        <authorList>
            <person name="Ferretti J.J."/>
            <person name="McShan W.M."/>
            <person name="Ajdic D.J."/>
            <person name="Savic D.J."/>
            <person name="Savic G."/>
            <person name="Lyon K."/>
            <person name="Primeaux C."/>
            <person name="Sezate S."/>
            <person name="Suvorov A.N."/>
            <person name="Kenton S."/>
            <person name="Lai H.S."/>
            <person name="Lin S.P."/>
            <person name="Qian Y."/>
            <person name="Jia H.G."/>
            <person name="Najar F.Z."/>
            <person name="Ren Q."/>
            <person name="Zhu H."/>
            <person name="Song L."/>
            <person name="White J."/>
            <person name="Yuan X."/>
            <person name="Clifton S.W."/>
            <person name="Roe B.A."/>
            <person name="McLaughlin R.E."/>
        </authorList>
    </citation>
    <scope>NUCLEOTIDE SEQUENCE [LARGE SCALE GENOMIC DNA]</scope>
    <source>
        <strain>ATCC 700294 / SF370 / Serotype M1</strain>
    </source>
</reference>
<reference key="2">
    <citation type="journal article" date="2005" name="J. Infect. Dis.">
        <title>Evolutionary origin and emergence of a highly successful clone of serotype M1 group A Streptococcus involved multiple horizontal gene transfer events.</title>
        <authorList>
            <person name="Sumby P."/>
            <person name="Porcella S.F."/>
            <person name="Madrigal A.G."/>
            <person name="Barbian K.D."/>
            <person name="Virtaneva K."/>
            <person name="Ricklefs S.M."/>
            <person name="Sturdevant D.E."/>
            <person name="Graham M.R."/>
            <person name="Vuopio-Varkila J."/>
            <person name="Hoe N.P."/>
            <person name="Musser J.M."/>
        </authorList>
    </citation>
    <scope>NUCLEOTIDE SEQUENCE [LARGE SCALE GENOMIC DNA]</scope>
    <source>
        <strain>ATCC BAA-947 / MGAS5005 / Serotype M1</strain>
    </source>
</reference>
<name>RL18_STRP1</name>
<accession>Q9A1V8</accession>
<accession>Q491N9</accession>
<evidence type="ECO:0000255" key="1">
    <source>
        <dbReference type="HAMAP-Rule" id="MF_01337"/>
    </source>
</evidence>
<evidence type="ECO:0000256" key="2">
    <source>
        <dbReference type="SAM" id="MobiDB-lite"/>
    </source>
</evidence>
<evidence type="ECO:0000305" key="3"/>
<gene>
    <name evidence="1" type="primary">rplR</name>
    <name type="ordered locus">SPy_0067</name>
    <name type="ordered locus">M5005_Spy0060</name>
</gene>
<organism>
    <name type="scientific">Streptococcus pyogenes serotype M1</name>
    <dbReference type="NCBI Taxonomy" id="301447"/>
    <lineage>
        <taxon>Bacteria</taxon>
        <taxon>Bacillati</taxon>
        <taxon>Bacillota</taxon>
        <taxon>Bacilli</taxon>
        <taxon>Lactobacillales</taxon>
        <taxon>Streptococcaceae</taxon>
        <taxon>Streptococcus</taxon>
    </lineage>
</organism>
<comment type="function">
    <text evidence="1">This is one of the proteins that bind and probably mediate the attachment of the 5S RNA into the large ribosomal subunit, where it forms part of the central protuberance.</text>
</comment>
<comment type="subunit">
    <text evidence="1">Part of the 50S ribosomal subunit; part of the 5S rRNA/L5/L18/L25 subcomplex. Contacts the 5S and 23S rRNAs.</text>
</comment>
<comment type="similarity">
    <text evidence="1">Belongs to the universal ribosomal protein uL18 family.</text>
</comment>
<feature type="chain" id="PRO_0000131359" description="Large ribosomal subunit protein uL18">
    <location>
        <begin position="1"/>
        <end position="118"/>
    </location>
</feature>
<feature type="region of interest" description="Disordered" evidence="2">
    <location>
        <begin position="1"/>
        <end position="25"/>
    </location>
</feature>
<feature type="compositionally biased region" description="Basic residues" evidence="2">
    <location>
        <begin position="10"/>
        <end position="20"/>
    </location>
</feature>
<proteinExistence type="inferred from homology"/>